<dbReference type="EMBL" id="AJ238248">
    <property type="protein sequence ID" value="CAB41450.1"/>
    <property type="status" value="ALT_FRAME"/>
    <property type="molecule type" value="mRNA"/>
</dbReference>
<dbReference type="EMBL" id="D26069">
    <property type="protein sequence ID" value="BAA05064.2"/>
    <property type="status" value="ALT_INIT"/>
    <property type="molecule type" value="mRNA"/>
</dbReference>
<dbReference type="EMBL" id="AK290369">
    <property type="protein sequence ID" value="BAF83058.1"/>
    <property type="molecule type" value="mRNA"/>
</dbReference>
<dbReference type="EMBL" id="CH471052">
    <property type="protein sequence ID" value="EAW78027.1"/>
    <property type="molecule type" value="Genomic_DNA"/>
</dbReference>
<dbReference type="EMBL" id="BC031005">
    <property type="protein sequence ID" value="AAH31005.1"/>
    <property type="molecule type" value="mRNA"/>
</dbReference>
<dbReference type="EMBL" id="BC060767">
    <property type="protein sequence ID" value="AAH60767.1"/>
    <property type="molecule type" value="mRNA"/>
</dbReference>
<dbReference type="CCDS" id="CCDS33924.1"/>
<dbReference type="RefSeq" id="NP_036419.3">
    <property type="nucleotide sequence ID" value="NM_012287.5"/>
</dbReference>
<dbReference type="PDB" id="6IF3">
    <property type="method" value="X-ray"/>
    <property type="resolution" value="1.50 A"/>
    <property type="chains" value="A=601-770"/>
</dbReference>
<dbReference type="PDBsum" id="6IF3"/>
<dbReference type="SMR" id="Q15057"/>
<dbReference type="BioGRID" id="117073">
    <property type="interactions" value="56"/>
</dbReference>
<dbReference type="FunCoup" id="Q15057">
    <property type="interactions" value="2664"/>
</dbReference>
<dbReference type="IntAct" id="Q15057">
    <property type="interactions" value="16"/>
</dbReference>
<dbReference type="MINT" id="Q15057"/>
<dbReference type="STRING" id="9606.ENSP00000324287"/>
<dbReference type="GlyCosmos" id="Q15057">
    <property type="glycosylation" value="1 site, 1 glycan"/>
</dbReference>
<dbReference type="GlyGen" id="Q15057">
    <property type="glycosylation" value="2 sites, 1 N-linked glycan (1 site), 1 O-linked glycan (1 site)"/>
</dbReference>
<dbReference type="iPTMnet" id="Q15057"/>
<dbReference type="MetOSite" id="Q15057"/>
<dbReference type="PhosphoSitePlus" id="Q15057"/>
<dbReference type="BioMuta" id="ACAP2"/>
<dbReference type="DMDM" id="39932727"/>
<dbReference type="jPOST" id="Q15057"/>
<dbReference type="MassIVE" id="Q15057"/>
<dbReference type="PaxDb" id="9606-ENSP00000324287"/>
<dbReference type="PeptideAtlas" id="Q15057"/>
<dbReference type="ProteomicsDB" id="60412"/>
<dbReference type="Pumba" id="Q15057"/>
<dbReference type="Antibodypedia" id="19460">
    <property type="antibodies" value="214 antibodies from 35 providers"/>
</dbReference>
<dbReference type="DNASU" id="23527"/>
<dbReference type="Ensembl" id="ENST00000326793.11">
    <property type="protein sequence ID" value="ENSP00000324287.6"/>
    <property type="gene ID" value="ENSG00000114331.16"/>
</dbReference>
<dbReference type="GeneID" id="23527"/>
<dbReference type="KEGG" id="hsa:23527"/>
<dbReference type="MANE-Select" id="ENST00000326793.11">
    <property type="protein sequence ID" value="ENSP00000324287.6"/>
    <property type="RefSeq nucleotide sequence ID" value="NM_012287.6"/>
    <property type="RefSeq protein sequence ID" value="NP_036419.3"/>
</dbReference>
<dbReference type="UCSC" id="uc003fun.5">
    <property type="organism name" value="human"/>
</dbReference>
<dbReference type="AGR" id="HGNC:16469"/>
<dbReference type="CTD" id="23527"/>
<dbReference type="DisGeNET" id="23527"/>
<dbReference type="GeneCards" id="ACAP2"/>
<dbReference type="HGNC" id="HGNC:16469">
    <property type="gene designation" value="ACAP2"/>
</dbReference>
<dbReference type="HPA" id="ENSG00000114331">
    <property type="expression patterns" value="Low tissue specificity"/>
</dbReference>
<dbReference type="MIM" id="607766">
    <property type="type" value="gene"/>
</dbReference>
<dbReference type="neXtProt" id="NX_Q15057"/>
<dbReference type="OpenTargets" id="ENSG00000114331"/>
<dbReference type="PharmGKB" id="PA26407"/>
<dbReference type="VEuPathDB" id="HostDB:ENSG00000114331"/>
<dbReference type="eggNOG" id="KOG0521">
    <property type="taxonomic scope" value="Eukaryota"/>
</dbReference>
<dbReference type="GeneTree" id="ENSGT00940000156389"/>
<dbReference type="HOGENOM" id="CLU_012513_0_1_1"/>
<dbReference type="InParanoid" id="Q15057"/>
<dbReference type="OMA" id="FGFREAM"/>
<dbReference type="OrthoDB" id="10070851at2759"/>
<dbReference type="PAN-GO" id="Q15057">
    <property type="GO annotations" value="1 GO annotation based on evolutionary models"/>
</dbReference>
<dbReference type="PhylomeDB" id="Q15057"/>
<dbReference type="TreeFam" id="TF318315"/>
<dbReference type="PathwayCommons" id="Q15057"/>
<dbReference type="SignaLink" id="Q15057"/>
<dbReference type="BioGRID-ORCS" id="23527">
    <property type="hits" value="47 hits in 1157 CRISPR screens"/>
</dbReference>
<dbReference type="ChiTaRS" id="ACAP2">
    <property type="organism name" value="human"/>
</dbReference>
<dbReference type="GeneWiki" id="CENTB2"/>
<dbReference type="GenomeRNAi" id="23527"/>
<dbReference type="Pharos" id="Q15057">
    <property type="development level" value="Tbio"/>
</dbReference>
<dbReference type="PRO" id="PR:Q15057"/>
<dbReference type="Proteomes" id="UP000005640">
    <property type="component" value="Chromosome 3"/>
</dbReference>
<dbReference type="RNAct" id="Q15057">
    <property type="molecule type" value="protein"/>
</dbReference>
<dbReference type="Bgee" id="ENSG00000114331">
    <property type="expression patterns" value="Expressed in epithelium of nasopharynx and 203 other cell types or tissues"/>
</dbReference>
<dbReference type="ExpressionAtlas" id="Q15057">
    <property type="expression patterns" value="baseline and differential"/>
</dbReference>
<dbReference type="GO" id="GO:0010008">
    <property type="term" value="C:endosome membrane"/>
    <property type="evidence" value="ECO:0000250"/>
    <property type="project" value="UniProtKB"/>
</dbReference>
<dbReference type="GO" id="GO:0016020">
    <property type="term" value="C:membrane"/>
    <property type="evidence" value="ECO:0007005"/>
    <property type="project" value="UniProtKB"/>
</dbReference>
<dbReference type="GO" id="GO:0005886">
    <property type="term" value="C:plasma membrane"/>
    <property type="evidence" value="ECO:0000314"/>
    <property type="project" value="UniProtKB"/>
</dbReference>
<dbReference type="GO" id="GO:0001726">
    <property type="term" value="C:ruffle"/>
    <property type="evidence" value="ECO:0000314"/>
    <property type="project" value="MGI"/>
</dbReference>
<dbReference type="GO" id="GO:0005096">
    <property type="term" value="F:GTPase activator activity"/>
    <property type="evidence" value="ECO:0000314"/>
    <property type="project" value="MGI"/>
</dbReference>
<dbReference type="GO" id="GO:0008270">
    <property type="term" value="F:zinc ion binding"/>
    <property type="evidence" value="ECO:0007669"/>
    <property type="project" value="UniProtKB-KW"/>
</dbReference>
<dbReference type="GO" id="GO:0030029">
    <property type="term" value="P:actin filament-based process"/>
    <property type="evidence" value="ECO:0000314"/>
    <property type="project" value="MGI"/>
</dbReference>
<dbReference type="GO" id="GO:1990090">
    <property type="term" value="P:cellular response to nerve growth factor stimulus"/>
    <property type="evidence" value="ECO:0000250"/>
    <property type="project" value="UniProtKB"/>
</dbReference>
<dbReference type="GO" id="GO:0032456">
    <property type="term" value="P:endocytic recycling"/>
    <property type="evidence" value="ECO:0000250"/>
    <property type="project" value="UniProtKB"/>
</dbReference>
<dbReference type="CDD" id="cd08851">
    <property type="entry name" value="ArfGap_ACAP2"/>
    <property type="match status" value="1"/>
</dbReference>
<dbReference type="CDD" id="cd07638">
    <property type="entry name" value="BAR_ACAP2"/>
    <property type="match status" value="1"/>
</dbReference>
<dbReference type="CDD" id="cd13250">
    <property type="entry name" value="PH_ACAP"/>
    <property type="match status" value="1"/>
</dbReference>
<dbReference type="FunFam" id="1.10.220.150:FF:000007">
    <property type="entry name" value="Arf-GAP with coiled-coil, ANK repeat and PH domain-containing protein 2"/>
    <property type="match status" value="1"/>
</dbReference>
<dbReference type="FunFam" id="1.25.40.20:FF:000020">
    <property type="entry name" value="Arf-GAP with coiled-coil, ANK repeat and PH domain-containing protein 2"/>
    <property type="match status" value="1"/>
</dbReference>
<dbReference type="FunFam" id="2.30.29.30:FF:000026">
    <property type="entry name" value="Arf-GAP with coiled-coil, ANK repeat and PH domain-containing protein 2"/>
    <property type="match status" value="1"/>
</dbReference>
<dbReference type="FunFam" id="1.20.1270.60:FF:000025">
    <property type="entry name" value="arf-GAP with coiled-coil, ANK repeat and PH domain-containing protein 2"/>
    <property type="match status" value="1"/>
</dbReference>
<dbReference type="Gene3D" id="1.25.40.20">
    <property type="entry name" value="Ankyrin repeat-containing domain"/>
    <property type="match status" value="1"/>
</dbReference>
<dbReference type="Gene3D" id="1.10.220.150">
    <property type="entry name" value="Arf GTPase activating protein"/>
    <property type="match status" value="1"/>
</dbReference>
<dbReference type="Gene3D" id="1.20.1270.60">
    <property type="entry name" value="Arfaptin homology (AH) domain/BAR domain"/>
    <property type="match status" value="1"/>
</dbReference>
<dbReference type="Gene3D" id="2.30.29.30">
    <property type="entry name" value="Pleckstrin-homology domain (PH domain)/Phosphotyrosine-binding domain (PTB)"/>
    <property type="match status" value="1"/>
</dbReference>
<dbReference type="InterPro" id="IPR045258">
    <property type="entry name" value="ACAP1/2/3-like"/>
</dbReference>
<dbReference type="InterPro" id="IPR027267">
    <property type="entry name" value="AH/BAR_dom_sf"/>
</dbReference>
<dbReference type="InterPro" id="IPR002110">
    <property type="entry name" value="Ankyrin_rpt"/>
</dbReference>
<dbReference type="InterPro" id="IPR036770">
    <property type="entry name" value="Ankyrin_rpt-contain_sf"/>
</dbReference>
<dbReference type="InterPro" id="IPR037278">
    <property type="entry name" value="ARFGAP/RecO"/>
</dbReference>
<dbReference type="InterPro" id="IPR001164">
    <property type="entry name" value="ArfGAP_dom"/>
</dbReference>
<dbReference type="InterPro" id="IPR038508">
    <property type="entry name" value="ArfGAP_dom_sf"/>
</dbReference>
<dbReference type="InterPro" id="IPR004148">
    <property type="entry name" value="BAR_dom"/>
</dbReference>
<dbReference type="InterPro" id="IPR011993">
    <property type="entry name" value="PH-like_dom_sf"/>
</dbReference>
<dbReference type="InterPro" id="IPR001849">
    <property type="entry name" value="PH_domain"/>
</dbReference>
<dbReference type="PANTHER" id="PTHR23180:SF241">
    <property type="entry name" value="ARF-GAP WITH COILED-COIL, ANK REPEAT AND PH DOMAIN-CONTAINING PROTEIN 2"/>
    <property type="match status" value="1"/>
</dbReference>
<dbReference type="PANTHER" id="PTHR23180">
    <property type="entry name" value="CENTAURIN/ARF"/>
    <property type="match status" value="1"/>
</dbReference>
<dbReference type="Pfam" id="PF12796">
    <property type="entry name" value="Ank_2"/>
    <property type="match status" value="1"/>
</dbReference>
<dbReference type="Pfam" id="PF01412">
    <property type="entry name" value="ArfGap"/>
    <property type="match status" value="1"/>
</dbReference>
<dbReference type="Pfam" id="PF16746">
    <property type="entry name" value="BAR_3"/>
    <property type="match status" value="1"/>
</dbReference>
<dbReference type="Pfam" id="PF00169">
    <property type="entry name" value="PH"/>
    <property type="match status" value="1"/>
</dbReference>
<dbReference type="PRINTS" id="PR00405">
    <property type="entry name" value="REVINTRACTNG"/>
</dbReference>
<dbReference type="SMART" id="SM00248">
    <property type="entry name" value="ANK"/>
    <property type="match status" value="3"/>
</dbReference>
<dbReference type="SMART" id="SM00105">
    <property type="entry name" value="ArfGap"/>
    <property type="match status" value="1"/>
</dbReference>
<dbReference type="SMART" id="SM00233">
    <property type="entry name" value="PH"/>
    <property type="match status" value="1"/>
</dbReference>
<dbReference type="SUPFAM" id="SSF48403">
    <property type="entry name" value="Ankyrin repeat"/>
    <property type="match status" value="1"/>
</dbReference>
<dbReference type="SUPFAM" id="SSF57863">
    <property type="entry name" value="ArfGap/RecO-like zinc finger"/>
    <property type="match status" value="1"/>
</dbReference>
<dbReference type="SUPFAM" id="SSF103657">
    <property type="entry name" value="BAR/IMD domain-like"/>
    <property type="match status" value="1"/>
</dbReference>
<dbReference type="SUPFAM" id="SSF50729">
    <property type="entry name" value="PH domain-like"/>
    <property type="match status" value="1"/>
</dbReference>
<dbReference type="PROSITE" id="PS50297">
    <property type="entry name" value="ANK_REP_REGION"/>
    <property type="match status" value="1"/>
</dbReference>
<dbReference type="PROSITE" id="PS50088">
    <property type="entry name" value="ANK_REPEAT"/>
    <property type="match status" value="2"/>
</dbReference>
<dbReference type="PROSITE" id="PS50115">
    <property type="entry name" value="ARFGAP"/>
    <property type="match status" value="1"/>
</dbReference>
<dbReference type="PROSITE" id="PS50003">
    <property type="entry name" value="PH_DOMAIN"/>
    <property type="match status" value="1"/>
</dbReference>
<comment type="function">
    <text evidence="6 7">GTPase-activating protein (GAP) for ADP ribosylation factor 6 (ARF6). Doesn't show GAP activity for RAB35 (PubMed:30905672).</text>
</comment>
<comment type="activity regulation">
    <text evidence="6">GAP activity stimulated by phosphatidylinositol 4,5-bisphosphate (PIP2) and phosphatidic acid.</text>
</comment>
<comment type="subunit">
    <text evidence="1 7">Interacts (via KANK domains) with RAB35 (GTP-bound form); the interaction is direct and probably recruits ACAP2 to membranes including plasma membrane (PubMed:30905672). Interacts with MICALL1; the interaction is indirect through RAB35 (By similarity).</text>
</comment>
<comment type="interaction">
    <interactant intactId="EBI-4401196">
        <id>Q15057</id>
    </interactant>
    <interactant intactId="EBI-715726">
        <id>Q96P50</id>
        <label>ACAP3</label>
    </interactant>
    <organismsDiffer>false</organismsDiffer>
    <experiments>4</experiments>
</comment>
<comment type="subcellular location">
    <subcellularLocation>
        <location evidence="7">Cell membrane</location>
    </subcellularLocation>
    <subcellularLocation>
        <location evidence="1">Endosome membrane</location>
        <topology evidence="1">Peripheral membrane protein</topology>
    </subcellularLocation>
    <text evidence="7">Colocalizes with RAB35 at the membrane protrusions of HEK293T cells.</text>
</comment>
<comment type="tissue specificity">
    <text evidence="6">Widely expressed. Highest level in lung.</text>
</comment>
<comment type="domain">
    <text evidence="7">The ANK domains are required for interaction with RAB35.</text>
</comment>
<comment type="sequence caution" evidence="8">
    <conflict type="erroneous initiation">
        <sequence resource="EMBL-CDS" id="BAA05064"/>
    </conflict>
</comment>
<comment type="sequence caution" evidence="8">
    <conflict type="frameshift">
        <sequence resource="EMBL-CDS" id="CAB41450"/>
    </conflict>
</comment>
<accession>Q15057</accession>
<accession>A8K2V4</accession>
<accession>Q8N5Z8</accession>
<accession>Q9UQR3</accession>
<sequence length="778" mass="88029">MKMTVDFEECLKDSPRFRAALEEVEGDVAELELKLDKLVKLCIAMIDTGKAFCVANKQFMNGIRDLAQYSSNDAVVETSLTKFSDSLQEMINFHTILFDQTQRSIKAQLQNFVKEDLRKFKDAKKQFEKVSEEKENALVKNAQVQRNKQHEVEEATNILTATRKCFRHIALDYVLQINVLQSKRRSEILKSMLSFMYAHLAFFHQGYDLFSELGPYMKDLGAQLDRLVVDAAKEKREMEQKHSTIQQKDFSSDDSKLEYNVDAANGIVMEGYLFKRASNAFKTWNRRWFSIQNNQLVYQKKFKDNPTVVVEDLRLCTVKHCEDIERRFCFEVVSPTKSCMLQADSEKLRQAWIKAVQTSIATAYREKGDESEKLDKKSSPSTGSLDSGNESKEKLLKGESALQRVQCIPGNASCCDCGLADPRWASINLGITLCIECSGIHRSLGVHFSKVRSLTLDTWEPELLKLMCELGNDVINRVYEANVEKMGIKKPQPGQRQEKEAYIRAKYVERKFVDKYSISLSPPEQQKKFVSKSSEEKRLSISKFGPGDQVRASAQSSVRSNDSGIQQSSDDGRESLPSTVSANSLYEPEGERQDSSMFLDSKHLNPGLQLYRASYEKNLPKMAEALAHGADVNWANSEENKATPLIQAVLGGSLVTCEFLLQNGANVNQRDVQGRGPLHHATVLGHTGQVCLFLKRGANQHATDEEGKDPLSIAVEAANADIVTLLRLARMNEEMRESEGLYGQPGDETYQDIFRDFSQMASNNPEKLNRFQQDSQKF</sequence>
<gene>
    <name type="primary">ACAP2</name>
    <name type="synonym">CENTB2</name>
    <name type="synonym">KIAA0041</name>
</gene>
<feature type="chain" id="PRO_0000074210" description="Arf-GAP with coiled-coil, ANK repeat and PH domain-containing protein 2">
    <location>
        <begin position="1"/>
        <end position="778"/>
    </location>
</feature>
<feature type="domain" description="BAR">
    <location>
        <begin position="1"/>
        <end position="226"/>
    </location>
</feature>
<feature type="domain" description="PH" evidence="3">
    <location>
        <begin position="266"/>
        <end position="361"/>
    </location>
</feature>
<feature type="domain" description="Arf-GAP" evidence="4">
    <location>
        <begin position="399"/>
        <end position="520"/>
    </location>
</feature>
<feature type="repeat" description="ANK 1">
    <location>
        <begin position="640"/>
        <end position="669"/>
    </location>
</feature>
<feature type="repeat" description="ANK 2">
    <location>
        <begin position="673"/>
        <end position="702"/>
    </location>
</feature>
<feature type="repeat" description="ANK 3">
    <location>
        <begin position="706"/>
        <end position="735"/>
    </location>
</feature>
<feature type="zinc finger region" description="C4-type" evidence="4">
    <location>
        <begin position="414"/>
        <end position="437"/>
    </location>
</feature>
<feature type="region of interest" description="Disordered" evidence="5">
    <location>
        <begin position="371"/>
        <end position="391"/>
    </location>
</feature>
<feature type="region of interest" description="Disordered" evidence="5">
    <location>
        <begin position="540"/>
        <end position="599"/>
    </location>
</feature>
<feature type="compositionally biased region" description="Polar residues" evidence="5">
    <location>
        <begin position="379"/>
        <end position="388"/>
    </location>
</feature>
<feature type="compositionally biased region" description="Polar residues" evidence="5">
    <location>
        <begin position="552"/>
        <end position="569"/>
    </location>
</feature>
<feature type="modified residue" description="Phosphoserine" evidence="10">
    <location>
        <position position="384"/>
    </location>
</feature>
<feature type="modified residue" description="Phosphoserine" evidence="2">
    <location>
        <position position="387"/>
    </location>
</feature>
<feature type="modified residue" description="Phosphoserine" evidence="11 12">
    <location>
        <position position="521"/>
    </location>
</feature>
<feature type="modified residue" description="Phosphoserine" evidence="12">
    <location>
        <position position="581"/>
    </location>
</feature>
<feature type="modified residue" description="Phosphoserine" evidence="2">
    <location>
        <position position="584"/>
    </location>
</feature>
<feature type="modified residue" description="Phosphotyrosine" evidence="9">
    <location>
        <position position="742"/>
    </location>
</feature>
<feature type="modified residue" description="Phosphoserine" evidence="12">
    <location>
        <position position="775"/>
    </location>
</feature>
<feature type="mutagenesis site" description="Loss of GAP activity." evidence="6">
    <original>R</original>
    <variation>Q</variation>
    <location>
        <position position="442"/>
    </location>
</feature>
<feature type="mutagenesis site" description="Strong decrease in interaction with RAB35." evidence="7">
    <original>D</original>
    <variation>A</variation>
    <location>
        <position position="721"/>
    </location>
</feature>
<feature type="mutagenesis site" description="Decreased interaction with RAB35." evidence="7">
    <original>R</original>
    <variation>A</variation>
    <location>
        <position position="727"/>
    </location>
</feature>
<feature type="mutagenesis site" description="Loss of interaction with RAB35." evidence="7">
    <original>R</original>
    <variation>H</variation>
    <location>
        <position position="727"/>
    </location>
</feature>
<feature type="mutagenesis site" description="Strong decrease in interaction with RAB35." evidence="7">
    <original>M</original>
    <variation>A</variation>
    <location>
        <position position="731"/>
    </location>
</feature>
<feature type="mutagenesis site" description="Decreased interaction with RAB35." evidence="7">
    <original>D</original>
    <variation>K</variation>
    <location>
        <position position="756"/>
    </location>
</feature>
<feature type="sequence conflict" description="In Ref. 1; CAB41450." evidence="8" ref="1">
    <original>V</original>
    <variation>G</variation>
    <location>
        <position position="5"/>
    </location>
</feature>
<feature type="sequence conflict" description="In Ref. 1; CAB41450." evidence="8" ref="1">
    <original>C</original>
    <variation>G</variation>
    <location>
        <position position="42"/>
    </location>
</feature>
<feature type="sequence conflict" description="In Ref. 1; CAB41450." evidence="8" ref="1">
    <original>V</original>
    <variation>G</variation>
    <location>
        <position position="229"/>
    </location>
</feature>
<feature type="sequence conflict" description="In Ref. 1; CAB41450." evidence="8" ref="1">
    <original>S</original>
    <variation>R</variation>
    <location>
        <position position="252"/>
    </location>
</feature>
<feature type="sequence conflict" description="In Ref. 1; CAB41450." evidence="8" ref="1">
    <original>E</original>
    <variation>K</variation>
    <location>
        <position position="258"/>
    </location>
</feature>
<feature type="sequence conflict" description="In Ref. 1; CAB41450." evidence="8" ref="1">
    <original>L</original>
    <variation>V</variation>
    <location>
        <position position="296"/>
    </location>
</feature>
<feature type="sequence conflict" description="In Ref. 6; AAH60767." evidence="8" ref="6">
    <original>G</original>
    <variation>E</variation>
    <location>
        <position position="564"/>
    </location>
</feature>
<feature type="helix" evidence="13">
    <location>
        <begin position="606"/>
        <end position="615"/>
    </location>
</feature>
<feature type="helix" evidence="13">
    <location>
        <begin position="619"/>
        <end position="627"/>
    </location>
</feature>
<feature type="turn" evidence="13">
    <location>
        <begin position="637"/>
        <end position="641"/>
    </location>
</feature>
<feature type="helix" evidence="13">
    <location>
        <begin position="644"/>
        <end position="651"/>
    </location>
</feature>
<feature type="helix" evidence="13">
    <location>
        <begin position="654"/>
        <end position="662"/>
    </location>
</feature>
<feature type="helix" evidence="13">
    <location>
        <begin position="677"/>
        <end position="684"/>
    </location>
</feature>
<feature type="helix" evidence="13">
    <location>
        <begin position="687"/>
        <end position="695"/>
    </location>
</feature>
<feature type="helix" evidence="13">
    <location>
        <begin position="710"/>
        <end position="716"/>
    </location>
</feature>
<feature type="helix" evidence="13">
    <location>
        <begin position="720"/>
        <end position="737"/>
    </location>
</feature>
<feature type="helix" evidence="13">
    <location>
        <begin position="753"/>
        <end position="757"/>
    </location>
</feature>
<proteinExistence type="evidence at protein level"/>
<name>ACAP2_HUMAN</name>
<organism>
    <name type="scientific">Homo sapiens</name>
    <name type="common">Human</name>
    <dbReference type="NCBI Taxonomy" id="9606"/>
    <lineage>
        <taxon>Eukaryota</taxon>
        <taxon>Metazoa</taxon>
        <taxon>Chordata</taxon>
        <taxon>Craniata</taxon>
        <taxon>Vertebrata</taxon>
        <taxon>Euteleostomi</taxon>
        <taxon>Mammalia</taxon>
        <taxon>Eutheria</taxon>
        <taxon>Euarchontoglires</taxon>
        <taxon>Primates</taxon>
        <taxon>Haplorrhini</taxon>
        <taxon>Catarrhini</taxon>
        <taxon>Hominidae</taxon>
        <taxon>Homo</taxon>
    </lineage>
</organism>
<reference key="1">
    <citation type="journal article" date="2000" name="J. Cell Biol.">
        <title>ACAPs are arf6 GTPase-activating proteins that function in the cell periphery.</title>
        <authorList>
            <person name="Jackson T.R."/>
            <person name="Brown F.D."/>
            <person name="Nie Z."/>
            <person name="Miura K."/>
            <person name="Foroni L."/>
            <person name="Sun J."/>
            <person name="Hsu V.W."/>
            <person name="Donaldson J.G."/>
            <person name="Randazzo P.A."/>
        </authorList>
    </citation>
    <scope>NUCLEOTIDE SEQUENCE [MRNA]</scope>
    <scope>FUNCTION</scope>
    <scope>ACTIVITY REGULATION</scope>
    <scope>TISSUE SPECIFICITY</scope>
    <scope>MUTAGENESIS OF ARG-442</scope>
    <source>
        <tissue>Leukocyte</tissue>
    </source>
</reference>
<reference key="2">
    <citation type="journal article" date="1994" name="DNA Res.">
        <title>Prediction of the coding sequences of unidentified human genes. II. The coding sequences of 40 new genes (KIAA0041-KIAA0080) deduced by analysis of cDNA clones from human cell line KG-1.</title>
        <authorList>
            <person name="Nomura N."/>
            <person name="Nagase T."/>
            <person name="Miyajima N."/>
            <person name="Sazuka T."/>
            <person name="Tanaka A."/>
            <person name="Sato S."/>
            <person name="Seki N."/>
            <person name="Kawarabayasi Y."/>
            <person name="Ishikawa K."/>
            <person name="Tabata S."/>
        </authorList>
    </citation>
    <scope>NUCLEOTIDE SEQUENCE [LARGE SCALE MRNA]</scope>
    <source>
        <tissue>Bone marrow</tissue>
    </source>
</reference>
<reference key="3">
    <citation type="submission" date="2003-01" db="EMBL/GenBank/DDBJ databases">
        <authorList>
            <person name="Ohara O."/>
            <person name="Nagase T."/>
            <person name="Kikuno R."/>
            <person name="Nomura N."/>
        </authorList>
    </citation>
    <scope>SEQUENCE REVISION</scope>
</reference>
<reference key="4">
    <citation type="journal article" date="2004" name="Nat. Genet.">
        <title>Complete sequencing and characterization of 21,243 full-length human cDNAs.</title>
        <authorList>
            <person name="Ota T."/>
            <person name="Suzuki Y."/>
            <person name="Nishikawa T."/>
            <person name="Otsuki T."/>
            <person name="Sugiyama T."/>
            <person name="Irie R."/>
            <person name="Wakamatsu A."/>
            <person name="Hayashi K."/>
            <person name="Sato H."/>
            <person name="Nagai K."/>
            <person name="Kimura K."/>
            <person name="Makita H."/>
            <person name="Sekine M."/>
            <person name="Obayashi M."/>
            <person name="Nishi T."/>
            <person name="Shibahara T."/>
            <person name="Tanaka T."/>
            <person name="Ishii S."/>
            <person name="Yamamoto J."/>
            <person name="Saito K."/>
            <person name="Kawai Y."/>
            <person name="Isono Y."/>
            <person name="Nakamura Y."/>
            <person name="Nagahari K."/>
            <person name="Murakami K."/>
            <person name="Yasuda T."/>
            <person name="Iwayanagi T."/>
            <person name="Wagatsuma M."/>
            <person name="Shiratori A."/>
            <person name="Sudo H."/>
            <person name="Hosoiri T."/>
            <person name="Kaku Y."/>
            <person name="Kodaira H."/>
            <person name="Kondo H."/>
            <person name="Sugawara M."/>
            <person name="Takahashi M."/>
            <person name="Kanda K."/>
            <person name="Yokoi T."/>
            <person name="Furuya T."/>
            <person name="Kikkawa E."/>
            <person name="Omura Y."/>
            <person name="Abe K."/>
            <person name="Kamihara K."/>
            <person name="Katsuta N."/>
            <person name="Sato K."/>
            <person name="Tanikawa M."/>
            <person name="Yamazaki M."/>
            <person name="Ninomiya K."/>
            <person name="Ishibashi T."/>
            <person name="Yamashita H."/>
            <person name="Murakawa K."/>
            <person name="Fujimori K."/>
            <person name="Tanai H."/>
            <person name="Kimata M."/>
            <person name="Watanabe M."/>
            <person name="Hiraoka S."/>
            <person name="Chiba Y."/>
            <person name="Ishida S."/>
            <person name="Ono Y."/>
            <person name="Takiguchi S."/>
            <person name="Watanabe S."/>
            <person name="Yosida M."/>
            <person name="Hotuta T."/>
            <person name="Kusano J."/>
            <person name="Kanehori K."/>
            <person name="Takahashi-Fujii A."/>
            <person name="Hara H."/>
            <person name="Tanase T.-O."/>
            <person name="Nomura Y."/>
            <person name="Togiya S."/>
            <person name="Komai F."/>
            <person name="Hara R."/>
            <person name="Takeuchi K."/>
            <person name="Arita M."/>
            <person name="Imose N."/>
            <person name="Musashino K."/>
            <person name="Yuuki H."/>
            <person name="Oshima A."/>
            <person name="Sasaki N."/>
            <person name="Aotsuka S."/>
            <person name="Yoshikawa Y."/>
            <person name="Matsunawa H."/>
            <person name="Ichihara T."/>
            <person name="Shiohata N."/>
            <person name="Sano S."/>
            <person name="Moriya S."/>
            <person name="Momiyama H."/>
            <person name="Satoh N."/>
            <person name="Takami S."/>
            <person name="Terashima Y."/>
            <person name="Suzuki O."/>
            <person name="Nakagawa S."/>
            <person name="Senoh A."/>
            <person name="Mizoguchi H."/>
            <person name="Goto Y."/>
            <person name="Shimizu F."/>
            <person name="Wakebe H."/>
            <person name="Hishigaki H."/>
            <person name="Watanabe T."/>
            <person name="Sugiyama A."/>
            <person name="Takemoto M."/>
            <person name="Kawakami B."/>
            <person name="Yamazaki M."/>
            <person name="Watanabe K."/>
            <person name="Kumagai A."/>
            <person name="Itakura S."/>
            <person name="Fukuzumi Y."/>
            <person name="Fujimori Y."/>
            <person name="Komiyama M."/>
            <person name="Tashiro H."/>
            <person name="Tanigami A."/>
            <person name="Fujiwara T."/>
            <person name="Ono T."/>
            <person name="Yamada K."/>
            <person name="Fujii Y."/>
            <person name="Ozaki K."/>
            <person name="Hirao M."/>
            <person name="Ohmori Y."/>
            <person name="Kawabata A."/>
            <person name="Hikiji T."/>
            <person name="Kobatake N."/>
            <person name="Inagaki H."/>
            <person name="Ikema Y."/>
            <person name="Okamoto S."/>
            <person name="Okitani R."/>
            <person name="Kawakami T."/>
            <person name="Noguchi S."/>
            <person name="Itoh T."/>
            <person name="Shigeta K."/>
            <person name="Senba T."/>
            <person name="Matsumura K."/>
            <person name="Nakajima Y."/>
            <person name="Mizuno T."/>
            <person name="Morinaga M."/>
            <person name="Sasaki M."/>
            <person name="Togashi T."/>
            <person name="Oyama M."/>
            <person name="Hata H."/>
            <person name="Watanabe M."/>
            <person name="Komatsu T."/>
            <person name="Mizushima-Sugano J."/>
            <person name="Satoh T."/>
            <person name="Shirai Y."/>
            <person name="Takahashi Y."/>
            <person name="Nakagawa K."/>
            <person name="Okumura K."/>
            <person name="Nagase T."/>
            <person name="Nomura N."/>
            <person name="Kikuchi H."/>
            <person name="Masuho Y."/>
            <person name="Yamashita R."/>
            <person name="Nakai K."/>
            <person name="Yada T."/>
            <person name="Nakamura Y."/>
            <person name="Ohara O."/>
            <person name="Isogai T."/>
            <person name="Sugano S."/>
        </authorList>
    </citation>
    <scope>NUCLEOTIDE SEQUENCE [LARGE SCALE MRNA]</scope>
    <source>
        <tissue>Tongue</tissue>
    </source>
</reference>
<reference key="5">
    <citation type="submission" date="2005-09" db="EMBL/GenBank/DDBJ databases">
        <authorList>
            <person name="Mural R.J."/>
            <person name="Istrail S."/>
            <person name="Sutton G.G."/>
            <person name="Florea L."/>
            <person name="Halpern A.L."/>
            <person name="Mobarry C.M."/>
            <person name="Lippert R."/>
            <person name="Walenz B."/>
            <person name="Shatkay H."/>
            <person name="Dew I."/>
            <person name="Miller J.R."/>
            <person name="Flanigan M.J."/>
            <person name="Edwards N.J."/>
            <person name="Bolanos R."/>
            <person name="Fasulo D."/>
            <person name="Halldorsson B.V."/>
            <person name="Hannenhalli S."/>
            <person name="Turner R."/>
            <person name="Yooseph S."/>
            <person name="Lu F."/>
            <person name="Nusskern D.R."/>
            <person name="Shue B.C."/>
            <person name="Zheng X.H."/>
            <person name="Zhong F."/>
            <person name="Delcher A.L."/>
            <person name="Huson D.H."/>
            <person name="Kravitz S.A."/>
            <person name="Mouchard L."/>
            <person name="Reinert K."/>
            <person name="Remington K.A."/>
            <person name="Clark A.G."/>
            <person name="Waterman M.S."/>
            <person name="Eichler E.E."/>
            <person name="Adams M.D."/>
            <person name="Hunkapiller M.W."/>
            <person name="Myers E.W."/>
            <person name="Venter J.C."/>
        </authorList>
    </citation>
    <scope>NUCLEOTIDE SEQUENCE [LARGE SCALE GENOMIC DNA]</scope>
</reference>
<reference key="6">
    <citation type="journal article" date="2004" name="Genome Res.">
        <title>The status, quality, and expansion of the NIH full-length cDNA project: the Mammalian Gene Collection (MGC).</title>
        <authorList>
            <consortium name="The MGC Project Team"/>
        </authorList>
    </citation>
    <scope>NUCLEOTIDE SEQUENCE [LARGE SCALE MRNA]</scope>
    <source>
        <tissue>Brain</tissue>
        <tissue>Placenta</tissue>
    </source>
</reference>
<reference key="7">
    <citation type="journal article" date="2005" name="Nat. Biotechnol.">
        <title>Immunoaffinity profiling of tyrosine phosphorylation in cancer cells.</title>
        <authorList>
            <person name="Rush J."/>
            <person name="Moritz A."/>
            <person name="Lee K.A."/>
            <person name="Guo A."/>
            <person name="Goss V.L."/>
            <person name="Spek E.J."/>
            <person name="Zhang H."/>
            <person name="Zha X.-M."/>
            <person name="Polakiewicz R.D."/>
            <person name="Comb M.J."/>
        </authorList>
    </citation>
    <scope>PHOSPHORYLATION [LARGE SCALE ANALYSIS] AT TYR-742</scope>
    <scope>IDENTIFICATION BY MASS SPECTROMETRY [LARGE SCALE ANALYSIS]</scope>
</reference>
<reference key="8">
    <citation type="journal article" date="2008" name="Proc. Natl. Acad. Sci. U.S.A.">
        <title>A quantitative atlas of mitotic phosphorylation.</title>
        <authorList>
            <person name="Dephoure N."/>
            <person name="Zhou C."/>
            <person name="Villen J."/>
            <person name="Beausoleil S.A."/>
            <person name="Bakalarski C.E."/>
            <person name="Elledge S.J."/>
            <person name="Gygi S.P."/>
        </authorList>
    </citation>
    <scope>PHOSPHORYLATION [LARGE SCALE ANALYSIS] AT SER-384</scope>
    <scope>IDENTIFICATION BY MASS SPECTROMETRY [LARGE SCALE ANALYSIS]</scope>
    <source>
        <tissue>Cervix carcinoma</tissue>
    </source>
</reference>
<reference key="9">
    <citation type="journal article" date="2009" name="Anal. Chem.">
        <title>Lys-N and trypsin cover complementary parts of the phosphoproteome in a refined SCX-based approach.</title>
        <authorList>
            <person name="Gauci S."/>
            <person name="Helbig A.O."/>
            <person name="Slijper M."/>
            <person name="Krijgsveld J."/>
            <person name="Heck A.J."/>
            <person name="Mohammed S."/>
        </authorList>
    </citation>
    <scope>IDENTIFICATION BY MASS SPECTROMETRY [LARGE SCALE ANALYSIS]</scope>
</reference>
<reference key="10">
    <citation type="journal article" date="2009" name="Sci. Signal.">
        <title>Quantitative phosphoproteomic analysis of T cell receptor signaling reveals system-wide modulation of protein-protein interactions.</title>
        <authorList>
            <person name="Mayya V."/>
            <person name="Lundgren D.H."/>
            <person name="Hwang S.-I."/>
            <person name="Rezaul K."/>
            <person name="Wu L."/>
            <person name="Eng J.K."/>
            <person name="Rodionov V."/>
            <person name="Han D.K."/>
        </authorList>
    </citation>
    <scope>IDENTIFICATION BY MASS SPECTROMETRY [LARGE SCALE ANALYSIS]</scope>
    <source>
        <tissue>Leukemic T-cell</tissue>
    </source>
</reference>
<reference key="11">
    <citation type="journal article" date="2010" name="Sci. Signal.">
        <title>Quantitative phosphoproteomics reveals widespread full phosphorylation site occupancy during mitosis.</title>
        <authorList>
            <person name="Olsen J.V."/>
            <person name="Vermeulen M."/>
            <person name="Santamaria A."/>
            <person name="Kumar C."/>
            <person name="Miller M.L."/>
            <person name="Jensen L.J."/>
            <person name="Gnad F."/>
            <person name="Cox J."/>
            <person name="Jensen T.S."/>
            <person name="Nigg E.A."/>
            <person name="Brunak S."/>
            <person name="Mann M."/>
        </authorList>
    </citation>
    <scope>PHOSPHORYLATION [LARGE SCALE ANALYSIS] AT SER-521</scope>
    <scope>IDENTIFICATION BY MASS SPECTROMETRY [LARGE SCALE ANALYSIS]</scope>
    <source>
        <tissue>Cervix carcinoma</tissue>
    </source>
</reference>
<reference key="12">
    <citation type="journal article" date="2011" name="BMC Syst. Biol.">
        <title>Initial characterization of the human central proteome.</title>
        <authorList>
            <person name="Burkard T.R."/>
            <person name="Planyavsky M."/>
            <person name="Kaupe I."/>
            <person name="Breitwieser F.P."/>
            <person name="Buerckstuemmer T."/>
            <person name="Bennett K.L."/>
            <person name="Superti-Furga G."/>
            <person name="Colinge J."/>
        </authorList>
    </citation>
    <scope>IDENTIFICATION BY MASS SPECTROMETRY [LARGE SCALE ANALYSIS]</scope>
</reference>
<reference key="13">
    <citation type="journal article" date="2011" name="Sci. Signal.">
        <title>System-wide temporal characterization of the proteome and phosphoproteome of human embryonic stem cell differentiation.</title>
        <authorList>
            <person name="Rigbolt K.T."/>
            <person name="Prokhorova T.A."/>
            <person name="Akimov V."/>
            <person name="Henningsen J."/>
            <person name="Johansen P.T."/>
            <person name="Kratchmarova I."/>
            <person name="Kassem M."/>
            <person name="Mann M."/>
            <person name="Olsen J.V."/>
            <person name="Blagoev B."/>
        </authorList>
    </citation>
    <scope>IDENTIFICATION BY MASS SPECTROMETRY [LARGE SCALE ANALYSIS]</scope>
</reference>
<reference key="14">
    <citation type="journal article" date="2012" name="Proc. Natl. Acad. Sci. U.S.A.">
        <title>N-terminal acetylome analyses and functional insights of the N-terminal acetyltransferase NatB.</title>
        <authorList>
            <person name="Van Damme P."/>
            <person name="Lasa M."/>
            <person name="Polevoda B."/>
            <person name="Gazquez C."/>
            <person name="Elosegui-Artola A."/>
            <person name="Kim D.S."/>
            <person name="De Juan-Pardo E."/>
            <person name="Demeyer K."/>
            <person name="Hole K."/>
            <person name="Larrea E."/>
            <person name="Timmerman E."/>
            <person name="Prieto J."/>
            <person name="Arnesen T."/>
            <person name="Sherman F."/>
            <person name="Gevaert K."/>
            <person name="Aldabe R."/>
        </authorList>
    </citation>
    <scope>IDENTIFICATION BY MASS SPECTROMETRY [LARGE SCALE ANALYSIS]</scope>
</reference>
<reference key="15">
    <citation type="journal article" date="2013" name="J. Proteome Res.">
        <title>Toward a comprehensive characterization of a human cancer cell phosphoproteome.</title>
        <authorList>
            <person name="Zhou H."/>
            <person name="Di Palma S."/>
            <person name="Preisinger C."/>
            <person name="Peng M."/>
            <person name="Polat A.N."/>
            <person name="Heck A.J."/>
            <person name="Mohammed S."/>
        </authorList>
    </citation>
    <scope>PHOSPHORYLATION [LARGE SCALE ANALYSIS] AT SER-521; SER-581 AND SER-775</scope>
    <scope>IDENTIFICATION BY MASS SPECTROMETRY [LARGE SCALE ANALYSIS]</scope>
    <source>
        <tissue>Cervix carcinoma</tissue>
        <tissue>Erythroleukemia</tissue>
    </source>
</reference>
<reference key="16">
    <citation type="journal article" date="2014" name="J. Proteomics">
        <title>An enzyme assisted RP-RPLC approach for in-depth analysis of human liver phosphoproteome.</title>
        <authorList>
            <person name="Bian Y."/>
            <person name="Song C."/>
            <person name="Cheng K."/>
            <person name="Dong M."/>
            <person name="Wang F."/>
            <person name="Huang J."/>
            <person name="Sun D."/>
            <person name="Wang L."/>
            <person name="Ye M."/>
            <person name="Zou H."/>
        </authorList>
    </citation>
    <scope>IDENTIFICATION BY MASS SPECTROMETRY [LARGE SCALE ANALYSIS]</scope>
    <source>
        <tissue>Liver</tissue>
    </source>
</reference>
<reference key="17">
    <citation type="journal article" date="2019" name="Structure">
        <title>Rab35/ACAP2 and Rab35/RUSC2 Complex Structures Reveal Molecular Basis for Effector Recognition by Rab35 GTPase.</title>
        <authorList>
            <person name="Lin L."/>
            <person name="Shi Y."/>
            <person name="Wang M."/>
            <person name="Wang C."/>
            <person name="Zhu J."/>
            <person name="Zhang R."/>
        </authorList>
    </citation>
    <scope>FUNCTION</scope>
    <scope>INTERACTION WITH RAB35</scope>
    <scope>DOMAIN</scope>
    <scope>MUTAGENESIS OF ASP-721; ARG-727; MET-731 AND ASP-756</scope>
    <scope>SUBCELLULAR LOCATION</scope>
</reference>
<keyword id="KW-0002">3D-structure</keyword>
<keyword id="KW-0040">ANK repeat</keyword>
<keyword id="KW-1003">Cell membrane</keyword>
<keyword id="KW-0175">Coiled coil</keyword>
<keyword id="KW-0967">Endosome</keyword>
<keyword id="KW-0343">GTPase activation</keyword>
<keyword id="KW-0472">Membrane</keyword>
<keyword id="KW-0479">Metal-binding</keyword>
<keyword id="KW-0597">Phosphoprotein</keyword>
<keyword id="KW-1267">Proteomics identification</keyword>
<keyword id="KW-1185">Reference proteome</keyword>
<keyword id="KW-0677">Repeat</keyword>
<keyword id="KW-0862">Zinc</keyword>
<keyword id="KW-0863">Zinc-finger</keyword>
<evidence type="ECO:0000250" key="1"/>
<evidence type="ECO:0000250" key="2">
    <source>
        <dbReference type="UniProtKB" id="Q6ZQK5"/>
    </source>
</evidence>
<evidence type="ECO:0000255" key="3">
    <source>
        <dbReference type="PROSITE-ProRule" id="PRU00145"/>
    </source>
</evidence>
<evidence type="ECO:0000255" key="4">
    <source>
        <dbReference type="PROSITE-ProRule" id="PRU00288"/>
    </source>
</evidence>
<evidence type="ECO:0000256" key="5">
    <source>
        <dbReference type="SAM" id="MobiDB-lite"/>
    </source>
</evidence>
<evidence type="ECO:0000269" key="6">
    <source>
    </source>
</evidence>
<evidence type="ECO:0000269" key="7">
    <source>
    </source>
</evidence>
<evidence type="ECO:0000305" key="8"/>
<evidence type="ECO:0007744" key="9">
    <source>
    </source>
</evidence>
<evidence type="ECO:0007744" key="10">
    <source>
    </source>
</evidence>
<evidence type="ECO:0007744" key="11">
    <source>
    </source>
</evidence>
<evidence type="ECO:0007744" key="12">
    <source>
    </source>
</evidence>
<evidence type="ECO:0007829" key="13">
    <source>
        <dbReference type="PDB" id="6IF3"/>
    </source>
</evidence>
<protein>
    <recommendedName>
        <fullName>Arf-GAP with coiled-coil, ANK repeat and PH domain-containing protein 2</fullName>
    </recommendedName>
    <alternativeName>
        <fullName>Centaurin-beta-2</fullName>
        <shortName>Cnt-b2</shortName>
    </alternativeName>
</protein>